<accession>Q54Q48</accession>
<protein>
    <recommendedName>
        <fullName>Putative uncharacterized protein DDB_G0284097</fullName>
    </recommendedName>
</protein>
<proteinExistence type="evidence at protein level"/>
<keyword id="KW-0175">Coiled coil</keyword>
<keyword id="KW-1185">Reference proteome</keyword>
<reference key="1">
    <citation type="journal article" date="2005" name="Nature">
        <title>The genome of the social amoeba Dictyostelium discoideum.</title>
        <authorList>
            <person name="Eichinger L."/>
            <person name="Pachebat J.A."/>
            <person name="Gloeckner G."/>
            <person name="Rajandream M.A."/>
            <person name="Sucgang R."/>
            <person name="Berriman M."/>
            <person name="Song J."/>
            <person name="Olsen R."/>
            <person name="Szafranski K."/>
            <person name="Xu Q."/>
            <person name="Tunggal B."/>
            <person name="Kummerfeld S."/>
            <person name="Madera M."/>
            <person name="Konfortov B.A."/>
            <person name="Rivero F."/>
            <person name="Bankier A.T."/>
            <person name="Lehmann R."/>
            <person name="Hamlin N."/>
            <person name="Davies R."/>
            <person name="Gaudet P."/>
            <person name="Fey P."/>
            <person name="Pilcher K."/>
            <person name="Chen G."/>
            <person name="Saunders D."/>
            <person name="Sodergren E.J."/>
            <person name="Davis P."/>
            <person name="Kerhornou A."/>
            <person name="Nie X."/>
            <person name="Hall N."/>
            <person name="Anjard C."/>
            <person name="Hemphill L."/>
            <person name="Bason N."/>
            <person name="Farbrother P."/>
            <person name="Desany B."/>
            <person name="Just E."/>
            <person name="Morio T."/>
            <person name="Rost R."/>
            <person name="Churcher C.M."/>
            <person name="Cooper J."/>
            <person name="Haydock S."/>
            <person name="van Driessche N."/>
            <person name="Cronin A."/>
            <person name="Goodhead I."/>
            <person name="Muzny D.M."/>
            <person name="Mourier T."/>
            <person name="Pain A."/>
            <person name="Lu M."/>
            <person name="Harper D."/>
            <person name="Lindsay R."/>
            <person name="Hauser H."/>
            <person name="James K.D."/>
            <person name="Quiles M."/>
            <person name="Madan Babu M."/>
            <person name="Saito T."/>
            <person name="Buchrieser C."/>
            <person name="Wardroper A."/>
            <person name="Felder M."/>
            <person name="Thangavelu M."/>
            <person name="Johnson D."/>
            <person name="Knights A."/>
            <person name="Loulseged H."/>
            <person name="Mungall K.L."/>
            <person name="Oliver K."/>
            <person name="Price C."/>
            <person name="Quail M.A."/>
            <person name="Urushihara H."/>
            <person name="Hernandez J."/>
            <person name="Rabbinowitsch E."/>
            <person name="Steffen D."/>
            <person name="Sanders M."/>
            <person name="Ma J."/>
            <person name="Kohara Y."/>
            <person name="Sharp S."/>
            <person name="Simmonds M.N."/>
            <person name="Spiegler S."/>
            <person name="Tivey A."/>
            <person name="Sugano S."/>
            <person name="White B."/>
            <person name="Walker D."/>
            <person name="Woodward J.R."/>
            <person name="Winckler T."/>
            <person name="Tanaka Y."/>
            <person name="Shaulsky G."/>
            <person name="Schleicher M."/>
            <person name="Weinstock G.M."/>
            <person name="Rosenthal A."/>
            <person name="Cox E.C."/>
            <person name="Chisholm R.L."/>
            <person name="Gibbs R.A."/>
            <person name="Loomis W.F."/>
            <person name="Platzer M."/>
            <person name="Kay R.R."/>
            <person name="Williams J.G."/>
            <person name="Dear P.H."/>
            <person name="Noegel A.A."/>
            <person name="Barrell B.G."/>
            <person name="Kuspa A."/>
        </authorList>
    </citation>
    <scope>NUCLEOTIDE SEQUENCE [LARGE SCALE GENOMIC DNA]</scope>
    <source>
        <strain>AX4</strain>
    </source>
</reference>
<reference key="2">
    <citation type="journal article" date="2006" name="Mol. Cell. Proteomics">
        <title>Proteomics fingerprinting of phagosome maturation and evidence for the role of a Galpha during uptake.</title>
        <authorList>
            <person name="Gotthardt D."/>
            <person name="Blancheteau V."/>
            <person name="Bosserhoff A."/>
            <person name="Ruppert T."/>
            <person name="Delorenzi M."/>
            <person name="Soldati T."/>
        </authorList>
    </citation>
    <scope>IDENTIFICATION BY MASS SPECTROMETRY [LARGE SCALE ANALYSIS]</scope>
    <source>
        <strain>AX2</strain>
    </source>
</reference>
<gene>
    <name type="ORF">DDB_G0284097</name>
</gene>
<evidence type="ECO:0000255" key="1"/>
<evidence type="ECO:0000256" key="2">
    <source>
        <dbReference type="SAM" id="MobiDB-lite"/>
    </source>
</evidence>
<name>Y5844_DICDI</name>
<organism>
    <name type="scientific">Dictyostelium discoideum</name>
    <name type="common">Social amoeba</name>
    <dbReference type="NCBI Taxonomy" id="44689"/>
    <lineage>
        <taxon>Eukaryota</taxon>
        <taxon>Amoebozoa</taxon>
        <taxon>Evosea</taxon>
        <taxon>Eumycetozoa</taxon>
        <taxon>Dictyostelia</taxon>
        <taxon>Dictyosteliales</taxon>
        <taxon>Dictyosteliaceae</taxon>
        <taxon>Dictyostelium</taxon>
    </lineage>
</organism>
<sequence>MNNRGGFSHPPGKFHMRGSKTYTPRNGGQGQGQPQQAAPAFDQQQQQQQQQQQQQQQQQQNFDQQQQQPQQPQQQQGGNNYYFQSKFGNKSHRGGYHGNGNGNNNGNNNNNNTSPNLNSTSHNNNNNNNNNNNNNNNNNNNTHFTNSRGGHRGGSSRGGSSRGGNSGSSRGGSRGGYRGQSSFYNSSYQKSGPRLLTSIVSLPPFSGGAIIGVKGSLWGLLNKATTARLKVFKNTAIIKCADAQQLDRAKEIVLKLKNTSPKYLSLIDYKGEQKIKFVHQPSFSEVILESGAIDPLATDGVQLMQDLINSHESQYVARLNETFSTLYSEKGSSTPFIDIEAGKIWYLHSSNIPSTPMTADKYELYTESLASVFQPSNVINEQFITSSQYKLFKQKKQFTFISVLDTESLDLLCIKCSEEKITPTTTTTTNTQQSPNSDSSEYKFTDPFIYKLNHINSSKVLFPQIKSGSDLRVTIDTHSKSKLVSGTGQHQYDNLIKFIDSIKIHKNSSGNNTYQIPDSNLFMTESIITRKVLMYRSDDNSLQFHVNEDIATRYTTSTPEVNRESTTVFCTSPALYDLFKSKNWTVDQASDELKKLSKNLRLLVSKHLDSTKFQPPSADHTTQFEQDDEEEEN</sequence>
<dbReference type="EMBL" id="AAFI02000063">
    <property type="protein sequence ID" value="EAL65389.1"/>
    <property type="molecule type" value="Genomic_DNA"/>
</dbReference>
<dbReference type="RefSeq" id="XP_638749.1">
    <property type="nucleotide sequence ID" value="XM_633657.1"/>
</dbReference>
<dbReference type="FunCoup" id="Q54Q48">
    <property type="interactions" value="552"/>
</dbReference>
<dbReference type="PaxDb" id="44689-DDB0237881"/>
<dbReference type="EnsemblProtists" id="EAL65389">
    <property type="protein sequence ID" value="EAL65389"/>
    <property type="gene ID" value="DDB_G0284097"/>
</dbReference>
<dbReference type="GeneID" id="8624419"/>
<dbReference type="KEGG" id="ddi:DDB_G0284097"/>
<dbReference type="dictyBase" id="DDB_G0284097"/>
<dbReference type="VEuPathDB" id="AmoebaDB:DDB_G0284097"/>
<dbReference type="eggNOG" id="ENOG502T1AA">
    <property type="taxonomic scope" value="Eukaryota"/>
</dbReference>
<dbReference type="HOGENOM" id="CLU_432417_0_0_1"/>
<dbReference type="InParanoid" id="Q54Q48"/>
<dbReference type="OMA" id="VKGSLWG"/>
<dbReference type="PRO" id="PR:Q54Q48"/>
<dbReference type="Proteomes" id="UP000002195">
    <property type="component" value="Chromosome 4"/>
</dbReference>
<dbReference type="GO" id="GO:0045335">
    <property type="term" value="C:phagocytic vesicle"/>
    <property type="evidence" value="ECO:0007005"/>
    <property type="project" value="dictyBase"/>
</dbReference>
<dbReference type="GO" id="GO:0004402">
    <property type="term" value="F:histone acetyltransferase activity"/>
    <property type="evidence" value="ECO:0000318"/>
    <property type="project" value="GO_Central"/>
</dbReference>
<dbReference type="InterPro" id="IPR053129">
    <property type="entry name" value="Integrator_complex_assoc"/>
</dbReference>
<dbReference type="PANTHER" id="PTHR48194">
    <property type="entry name" value="FINGER PROTEIN, PUTATIVE-RELATED"/>
    <property type="match status" value="1"/>
</dbReference>
<dbReference type="PANTHER" id="PTHR48194:SF1">
    <property type="entry name" value="INTEGRATOR COMPLEX SUBUNIT 10-LIKE PROTEIN"/>
    <property type="match status" value="1"/>
</dbReference>
<feature type="chain" id="PRO_0000350901" description="Putative uncharacterized protein DDB_G0284097">
    <location>
        <begin position="1"/>
        <end position="633"/>
    </location>
</feature>
<feature type="region of interest" description="Disordered" evidence="2">
    <location>
        <begin position="1"/>
        <end position="188"/>
    </location>
</feature>
<feature type="region of interest" description="Disordered" evidence="2">
    <location>
        <begin position="611"/>
        <end position="633"/>
    </location>
</feature>
<feature type="coiled-coil region" evidence="1">
    <location>
        <begin position="580"/>
        <end position="607"/>
    </location>
</feature>
<feature type="compositionally biased region" description="Low complexity" evidence="2">
    <location>
        <begin position="32"/>
        <end position="80"/>
    </location>
</feature>
<feature type="compositionally biased region" description="Low complexity" evidence="2">
    <location>
        <begin position="104"/>
        <end position="148"/>
    </location>
</feature>
<feature type="compositionally biased region" description="Gly residues" evidence="2">
    <location>
        <begin position="152"/>
        <end position="178"/>
    </location>
</feature>